<protein>
    <recommendedName>
        <fullName>Stage IV sporulation protein A</fullName>
        <ecNumber>3.6.1.-</ecNumber>
    </recommendedName>
    <alternativeName>
        <fullName>Coat morphogenetic protein SpoIVA</fullName>
    </alternativeName>
</protein>
<evidence type="ECO:0000269" key="1">
    <source>
    </source>
</evidence>
<evidence type="ECO:0000269" key="2">
    <source>
    </source>
</evidence>
<evidence type="ECO:0000269" key="3">
    <source>
    </source>
</evidence>
<evidence type="ECO:0000269" key="4">
    <source>
    </source>
</evidence>
<evidence type="ECO:0000269" key="5">
    <source>
    </source>
</evidence>
<evidence type="ECO:0000269" key="6">
    <source>
    </source>
</evidence>
<evidence type="ECO:0000269" key="7">
    <source>
    </source>
</evidence>
<evidence type="ECO:0000269" key="8">
    <source>
    </source>
</evidence>
<evidence type="ECO:0000269" key="9">
    <source>
    </source>
</evidence>
<evidence type="ECO:0000269" key="10">
    <source>
    </source>
</evidence>
<evidence type="ECO:0000269" key="11">
    <source>
    </source>
</evidence>
<evidence type="ECO:0000269" key="12">
    <source>
    </source>
</evidence>
<evidence type="ECO:0000305" key="13"/>
<comment type="function">
    <text evidence="3 5 6 9 10">ATPase. Has a role at an early stage in the morphogenesis of the spore coat outer layers. Its ATP hydrolysis is required for proper assembly of the spore coat. Forms a basement layer around the outside surface of the forespore and self-assembles irreversibly into higher order structures by binding and hydrolyzing ATP thus creating a durable and stable platform upon which thereafter morphogenesis of the coat can take place. Required for proper localization of spore coat protein CotE and sporulation-specific proteins including SpoVM.</text>
</comment>
<comment type="catalytic activity">
    <reaction evidence="6 9">
        <text>ATP + H2O = ADP + phosphate + H(+)</text>
        <dbReference type="Rhea" id="RHEA:13065"/>
        <dbReference type="ChEBI" id="CHEBI:15377"/>
        <dbReference type="ChEBI" id="CHEBI:15378"/>
        <dbReference type="ChEBI" id="CHEBI:30616"/>
        <dbReference type="ChEBI" id="CHEBI:43474"/>
        <dbReference type="ChEBI" id="CHEBI:456216"/>
    </reaction>
</comment>
<comment type="biophysicochemical properties">
    <kinetics>
        <KM evidence="6 9">412 uM for ATP</KM>
        <text evidence="6 9">The turnover rate is 2.7 pmol/min/pmol of SpoIVA at Vmax (PubMed:18691972). The turnover rate is 1.0 pmol/min/pmol of SpoIVA at Vmax (PubMed:23267091).</text>
    </kinetics>
</comment>
<comment type="subunit">
    <text evidence="5 6 7 8 9">Polymerizes to self-assemble into static filaments. ATP hydrolysis is required by every subunit for incorporation into the growing polymer by inducing a conformational change that drives polymerization of a nucleotide-free filament. Polymerization requires a critical concentration of the protein and only occurs after it is localized to the surface of the developing spore. Interacts (via extreme C-terminus Gly-486) with SpoVM (via Ile-6). Interacts (via full-length) with SpoVID (via C-terminus 499-575 AA). Interacts with SafA.</text>
</comment>
<comment type="subcellular location">
    <subcellularLocation>
        <location evidence="13">Cytoplasm</location>
    </subcellularLocation>
    <text evidence="4 5 6 8 9 10 11 12">Uniformly distributed on the membrane around the forespore, lying close to or on its outer surface. Expression only necessary in the mother cell chamber of the sporangium for the formation of a mature spore. According to PubMed:8299942, not a coat protein of the mature spore, is only transiently associated with the assembling coat. According to PubMed:9922240, present as a component of the fully mature spore. Proper localization requires the expression of a gene spoVM which is under the control of the mother cell transcription factor sigma E.</text>
</comment>
<comment type="developmental stage">
    <text evidence="3 4 12">Expressed soon after the formation of the asymmetric septum during sporulation. Expression commences about 2 hours after the onset of sporulation. Assembly around the developing forespore commences at the time of polar division and seems to continue after engulfment of the forespore is complete. Remains present throughout the late stages of morphogenesis and during this accumulation process preferentially collects on the mother cell side of the engulfed forespore, but eventually is deposited equally all around the forespore.</text>
</comment>
<comment type="domain">
    <text evidence="12">Extreme C-terminal region (AA 487-492) is required for its proper localization into a spherical shell around the developing forespore. N-terminus (AA 1-64) is functionally important although largely dispensable for proper localization.</text>
</comment>
<comment type="PTM">
    <text evidence="1">Seems to be cleaved by the YabG protease.</text>
</comment>
<comment type="disruption phenotype">
    <text evidence="2 3 6">Forespores lack a well-defined cortex, and the coat is present as swirls in the mother cell compartment of the sporangia rather than having been deposited around the forespore protoplasts. According to PubMed:18691972, unable to sporulate.</text>
</comment>
<comment type="miscellaneous">
    <text>Present in an increased level in yabG mutant spores.</text>
</comment>
<dbReference type="EC" id="3.6.1.-"/>
<dbReference type="EMBL" id="M81169">
    <property type="protein sequence ID" value="AAA22802.1"/>
    <property type="molecule type" value="Genomic_DNA"/>
</dbReference>
<dbReference type="EMBL" id="M80926">
    <property type="protein sequence ID" value="AAB59029.1"/>
    <property type="molecule type" value="Genomic_DNA"/>
</dbReference>
<dbReference type="EMBL" id="AL009126">
    <property type="protein sequence ID" value="CAB14196.1"/>
    <property type="molecule type" value="Genomic_DNA"/>
</dbReference>
<dbReference type="PIR" id="A41970">
    <property type="entry name" value="A41970"/>
</dbReference>
<dbReference type="RefSeq" id="NP_390161.1">
    <property type="nucleotide sequence ID" value="NC_000964.3"/>
</dbReference>
<dbReference type="RefSeq" id="WP_003230572.1">
    <property type="nucleotide sequence ID" value="NZ_OZ025638.1"/>
</dbReference>
<dbReference type="FunCoup" id="P35149">
    <property type="interactions" value="77"/>
</dbReference>
<dbReference type="STRING" id="224308.BSU22800"/>
<dbReference type="PaxDb" id="224308-BSU22800"/>
<dbReference type="EnsemblBacteria" id="CAB14196">
    <property type="protein sequence ID" value="CAB14196"/>
    <property type="gene ID" value="BSU_22800"/>
</dbReference>
<dbReference type="GeneID" id="938991"/>
<dbReference type="KEGG" id="bsu:BSU22800"/>
<dbReference type="PATRIC" id="fig|224308.179.peg.2485"/>
<dbReference type="eggNOG" id="COG0699">
    <property type="taxonomic scope" value="Bacteria"/>
</dbReference>
<dbReference type="InParanoid" id="P35149"/>
<dbReference type="OrthoDB" id="9761464at2"/>
<dbReference type="PhylomeDB" id="P35149"/>
<dbReference type="BioCyc" id="BSUB:BSU22800-MONOMER"/>
<dbReference type="Proteomes" id="UP000001570">
    <property type="component" value="Chromosome"/>
</dbReference>
<dbReference type="GO" id="GO:0005737">
    <property type="term" value="C:cytoplasm"/>
    <property type="evidence" value="ECO:0007669"/>
    <property type="project" value="UniProtKB-SubCell"/>
</dbReference>
<dbReference type="GO" id="GO:0043595">
    <property type="term" value="C:endospore cortex"/>
    <property type="evidence" value="ECO:0000315"/>
    <property type="project" value="UniProtKB"/>
</dbReference>
<dbReference type="GO" id="GO:0042601">
    <property type="term" value="C:endospore-forming forespore"/>
    <property type="evidence" value="ECO:0000314"/>
    <property type="project" value="UniProtKB"/>
</dbReference>
<dbReference type="GO" id="GO:0031160">
    <property type="term" value="C:spore wall"/>
    <property type="evidence" value="ECO:0000314"/>
    <property type="project" value="UniProtKB"/>
</dbReference>
<dbReference type="GO" id="GO:0005524">
    <property type="term" value="F:ATP binding"/>
    <property type="evidence" value="ECO:0000314"/>
    <property type="project" value="UniProtKB"/>
</dbReference>
<dbReference type="GO" id="GO:0016887">
    <property type="term" value="F:ATP hydrolysis activity"/>
    <property type="evidence" value="ECO:0000314"/>
    <property type="project" value="UniProtKB"/>
</dbReference>
<dbReference type="GO" id="GO:0000270">
    <property type="term" value="P:peptidoglycan metabolic process"/>
    <property type="evidence" value="ECO:0000315"/>
    <property type="project" value="UniProtKB"/>
</dbReference>
<dbReference type="GO" id="GO:0051259">
    <property type="term" value="P:protein complex oligomerization"/>
    <property type="evidence" value="ECO:0000314"/>
    <property type="project" value="UniProtKB"/>
</dbReference>
<dbReference type="GO" id="GO:0051258">
    <property type="term" value="P:protein polymerization"/>
    <property type="evidence" value="ECO:0000314"/>
    <property type="project" value="UniProtKB"/>
</dbReference>
<dbReference type="GO" id="GO:0009847">
    <property type="term" value="P:spore germination"/>
    <property type="evidence" value="ECO:0000315"/>
    <property type="project" value="UniProtKB"/>
</dbReference>
<dbReference type="GO" id="GO:0042244">
    <property type="term" value="P:spore wall assembly"/>
    <property type="evidence" value="ECO:0000314"/>
    <property type="project" value="UniProtKB"/>
</dbReference>
<dbReference type="GO" id="GO:0070590">
    <property type="term" value="P:spore wall biogenesis"/>
    <property type="evidence" value="ECO:0000314"/>
    <property type="project" value="UniProtKB"/>
</dbReference>
<dbReference type="GO" id="GO:0043934">
    <property type="term" value="P:sporulation"/>
    <property type="evidence" value="ECO:0000314"/>
    <property type="project" value="UniProtKB"/>
</dbReference>
<dbReference type="GO" id="GO:0030435">
    <property type="term" value="P:sporulation resulting in formation of a cellular spore"/>
    <property type="evidence" value="ECO:0000314"/>
    <property type="project" value="UniProtKB"/>
</dbReference>
<dbReference type="CDD" id="cd00882">
    <property type="entry name" value="Ras_like_GTPase"/>
    <property type="match status" value="1"/>
</dbReference>
<dbReference type="FunFam" id="3.40.50.300:FF:000648">
    <property type="entry name" value="Stage IV sporulation protein A"/>
    <property type="match status" value="1"/>
</dbReference>
<dbReference type="Gene3D" id="3.40.50.300">
    <property type="entry name" value="P-loop containing nucleotide triphosphate hydrolases"/>
    <property type="match status" value="1"/>
</dbReference>
<dbReference type="InterPro" id="IPR027417">
    <property type="entry name" value="P-loop_NTPase"/>
</dbReference>
<dbReference type="InterPro" id="IPR046842">
    <property type="entry name" value="SpoIVA_ATPase"/>
</dbReference>
<dbReference type="InterPro" id="IPR046840">
    <property type="entry name" value="SpoIVA_C"/>
</dbReference>
<dbReference type="InterPro" id="IPR046841">
    <property type="entry name" value="SpoIVA_middle"/>
</dbReference>
<dbReference type="InterPro" id="IPR014201">
    <property type="entry name" value="Spore_IV_A"/>
</dbReference>
<dbReference type="NCBIfam" id="TIGR02836">
    <property type="entry name" value="spore_IV_A"/>
    <property type="match status" value="1"/>
</dbReference>
<dbReference type="Pfam" id="PF09547">
    <property type="entry name" value="SpoIVA_ATPase"/>
    <property type="match status" value="1"/>
</dbReference>
<dbReference type="Pfam" id="PF20439">
    <property type="entry name" value="SpoIVA_C"/>
    <property type="match status" value="1"/>
</dbReference>
<dbReference type="Pfam" id="PF20438">
    <property type="entry name" value="SpoIVA_middle"/>
    <property type="match status" value="1"/>
</dbReference>
<dbReference type="PIRSF" id="PIRSF007466">
    <property type="entry name" value="SpoIVA"/>
    <property type="match status" value="1"/>
</dbReference>
<dbReference type="SUPFAM" id="SSF52540">
    <property type="entry name" value="P-loop containing nucleoside triphosphate hydrolases"/>
    <property type="match status" value="1"/>
</dbReference>
<keyword id="KW-0067">ATP-binding</keyword>
<keyword id="KW-0963">Cytoplasm</keyword>
<keyword id="KW-0903">Direct protein sequencing</keyword>
<keyword id="KW-0378">Hydrolase</keyword>
<keyword id="KW-0547">Nucleotide-binding</keyword>
<keyword id="KW-1185">Reference proteome</keyword>
<keyword id="KW-0749">Sporulation</keyword>
<accession>P35149</accession>
<feature type="chain" id="PRO_0000072073" description="Stage IV sporulation protein A">
    <location>
        <begin position="1"/>
        <end position="492"/>
    </location>
</feature>
<feature type="short sequence motif" description="Walker A motif; involved in ATP-binding and hydrolysis">
    <location>
        <begin position="24"/>
        <end position="31"/>
    </location>
</feature>
<feature type="binding site" evidence="13">
    <location>
        <begin position="24"/>
        <end position="31"/>
    </location>
    <ligand>
        <name>ATP</name>
        <dbReference type="ChEBI" id="CHEBI:30616"/>
    </ligand>
</feature>
<feature type="mutagenesis site" description="20-fold reduction in sporulation efficiency. Largely enriched at the forespore periphery, although some localization to the cytosol. Binding of ATP reduced over 23-fold. Leads to diminished ATP hydrolysis." evidence="6">
    <original>K</original>
    <variation>A</variation>
    <location>
        <position position="30"/>
    </location>
</feature>
<feature type="mutagenesis site" description="Mislocalized to the mother cell cytosol. Misassembles the spore coat. Mislocalizes CotE but not SpoVM. Does not multimerize. Almost complete block in spore formation." evidence="6">
    <original>K</original>
    <variation>E</variation>
    <location>
        <position position="30"/>
    </location>
</feature>
<feature type="mutagenesis site" description="Spores form largely normal coats and possess at least some cortex, but cannot remain dehydrated after mother cell lysis. Abnormal synthesis and an insufficient level of spore peptidoglycan, which contains amidated diaminopimelic acid, which is normally found only in vegetative cell peptidoglycan. Defective in germination; when associated with P-256." evidence="2">
    <original>L</original>
    <variation>P</variation>
    <location>
        <position position="59"/>
    </location>
</feature>
<feature type="mutagenesis site" description="Altered cortex and coat formation; when associated with S-230." evidence="2">
    <original>M</original>
    <variation>L</variation>
    <location>
        <position position="69"/>
    </location>
</feature>
<feature type="mutagenesis site" description="500-fold decrease in sporulation efficiency. 5-log decrease in sporulation efficiency; no ATPase activity, but no change in ATP-binding ability; unable to polymerize and fails to promote coat assembly; when associated with A-71." evidence="9">
    <original>T</original>
    <variation>A</variation>
    <location>
        <position position="70"/>
    </location>
</feature>
<feature type="mutagenesis site" description="Does not abrogate sporulation. 5-log decrease in sporulation efficiency; no ATPase activity, but no change in ATP-binding ability; unable to polymerize and fails to promote coat assembly; when associated with A-70." evidence="9">
    <original>T</original>
    <variation>A</variation>
    <location>
        <position position="71"/>
    </location>
</feature>
<feature type="mutagenesis site" description="Completely abolished sporulation efficiency. No ATPase activity, but no change in ATP-binding ability. Unable to polymerize and fails to promote coat assembly;." evidence="9">
    <original>D</original>
    <variation>A</variation>
    <location>
        <position position="97"/>
    </location>
</feature>
<feature type="mutagenesis site" description="Defective in germination; when associated with N-283." evidence="2">
    <original>C</original>
    <variation>S</variation>
    <location>
        <position position="98"/>
    </location>
</feature>
<feature type="mutagenesis site" description="Unable to sporulate." evidence="9">
    <original>S</original>
    <variation>K</variation>
    <location>
        <position position="189"/>
    </location>
</feature>
<feature type="mutagenesis site" description="Defective in germination; when associated with V-367 and R-383." evidence="2">
    <original>I</original>
    <variation>A</variation>
    <location>
        <position position="210"/>
    </location>
</feature>
<feature type="mutagenesis site" description="Altered cortex and coat formation; when associated with V-367 and R-383." evidence="2">
    <original>I</original>
    <variation>M</variation>
    <location>
        <position position="210"/>
    </location>
</feature>
<feature type="mutagenesis site" description="Altered cortex and coat formation; when associated with L-69." evidence="2">
    <original>R</original>
    <variation>S</variation>
    <location>
        <position position="230"/>
    </location>
</feature>
<feature type="mutagenesis site" description="Altered cortex and coat formation." evidence="2">
    <original>V</original>
    <variation>G</variation>
    <location>
        <position position="241"/>
    </location>
</feature>
<feature type="mutagenesis site" description="Defective in germination; when associated with P-59." evidence="2">
    <original>H</original>
    <variation>P</variation>
    <location>
        <position position="256"/>
    </location>
</feature>
<feature type="mutagenesis site" description="Defective in germination; when associated with S-98." evidence="2">
    <original>V</original>
    <variation>N</variation>
    <location>
        <position position="283"/>
    </location>
</feature>
<feature type="mutagenesis site" description="Defective in germination; when associated with A-210 and R-383. Altered cortex and coat formation; when associated with M-210 and R-383." evidence="2">
    <original>I</original>
    <variation>V</variation>
    <location>
        <position position="367"/>
    </location>
</feature>
<feature type="mutagenesis site" description="Defective in germination; when associated with A-210 and V-367. Altered cortex and coat formation; when associated with M-210 and R-383." evidence="2">
    <original>I</original>
    <variation>R</variation>
    <location>
        <position position="383"/>
    </location>
</feature>
<feature type="mutagenesis site" description="Altered cortex and coat formation. Possesses swirls of coat in the mother cell cytoplasm and does not possess a cortex." evidence="2">
    <original>L</original>
    <variation>P</variation>
    <location>
        <position position="393"/>
    </location>
</feature>
<feature type="mutagenesis site" description="Altered cortex and coat formation, affects localization to the forespore; when associated with R-457 and V-418." evidence="2">
    <original>I</original>
    <variation>P</variation>
    <location>
        <position position="400"/>
    </location>
</feature>
<feature type="mutagenesis site" description="Altered cortex and coat formation." evidence="2">
    <original>G</original>
    <variation>R</variation>
    <location>
        <position position="416"/>
    </location>
</feature>
<feature type="mutagenesis site" description="Altered cortex and coat formation, affects localization to the forespore; when associated with P-400 and R-457." evidence="2">
    <original>E</original>
    <variation>V</variation>
    <location>
        <position position="418"/>
    </location>
</feature>
<feature type="mutagenesis site" description="Altered cortex and coat formation, affects localization to the forespore." evidence="2">
    <original>V</original>
    <variation>G</variation>
    <location>
        <position position="453"/>
    </location>
</feature>
<feature type="mutagenesis site" description="Altered cortex and coat formation, affects localization to the forespore; when associated with P-400 and V-418." evidence="2">
    <original>I</original>
    <variation>R</variation>
    <location>
        <position position="457"/>
    </location>
</feature>
<feature type="mutagenesis site" description="Suppressor mutation that reverses the mislocalization and sporulation defect of the A-6 mutation in SpoVM. Causes little impairment of sporulation." evidence="5">
    <original>G</original>
    <variation>V</variation>
    <location>
        <position position="486"/>
    </location>
</feature>
<name>SP4A_BACSU</name>
<reference key="1">
    <citation type="journal article" date="1992" name="J. Bacteriol.">
        <title>Characterization of spoIVA, a sporulation gene involved in coat morphogenesis in Bacillus subtilis.</title>
        <authorList>
            <person name="Roels S."/>
            <person name="Driks A."/>
            <person name="Losick R."/>
        </authorList>
    </citation>
    <scope>NUCLEOTIDE SEQUENCE [GENOMIC DNA]</scope>
    <scope>FUNCTION</scope>
    <scope>DEVELOPMENTAL STAGE</scope>
    <scope>DISRUPTION PHENOTYPE</scope>
    <source>
        <strain>168 / PY79</strain>
    </source>
</reference>
<reference key="2">
    <citation type="journal article" date="1992" name="J. Bacteriol.">
        <title>Characterization of a sporulation gene, spoIVA, involved in spore coat morphogenesis in Bacillus subtilis.</title>
        <authorList>
            <person name="Stevens C.M."/>
            <person name="Daniel R."/>
            <person name="Illing N."/>
            <person name="Errington J."/>
        </authorList>
    </citation>
    <scope>NUCLEOTIDE SEQUENCE [GENOMIC DNA]</scope>
    <scope>SUBCELLULAR LOCATION</scope>
    <scope>DEVELOPMENTAL STAGE</scope>
    <source>
        <strain>168 / Marburg / ATCC 6051 / DSM 10 / JCM 1465 / NBRC 13719 / NCIMB 3610 / NRRL NRS-744 / VKM B-501</strain>
    </source>
</reference>
<reference key="3">
    <citation type="journal article" date="1997" name="Nature">
        <title>The complete genome sequence of the Gram-positive bacterium Bacillus subtilis.</title>
        <authorList>
            <person name="Kunst F."/>
            <person name="Ogasawara N."/>
            <person name="Moszer I."/>
            <person name="Albertini A.M."/>
            <person name="Alloni G."/>
            <person name="Azevedo V."/>
            <person name="Bertero M.G."/>
            <person name="Bessieres P."/>
            <person name="Bolotin A."/>
            <person name="Borchert S."/>
            <person name="Borriss R."/>
            <person name="Boursier L."/>
            <person name="Brans A."/>
            <person name="Braun M."/>
            <person name="Brignell S.C."/>
            <person name="Bron S."/>
            <person name="Brouillet S."/>
            <person name="Bruschi C.V."/>
            <person name="Caldwell B."/>
            <person name="Capuano V."/>
            <person name="Carter N.M."/>
            <person name="Choi S.-K."/>
            <person name="Codani J.-J."/>
            <person name="Connerton I.F."/>
            <person name="Cummings N.J."/>
            <person name="Daniel R.A."/>
            <person name="Denizot F."/>
            <person name="Devine K.M."/>
            <person name="Duesterhoeft A."/>
            <person name="Ehrlich S.D."/>
            <person name="Emmerson P.T."/>
            <person name="Entian K.-D."/>
            <person name="Errington J."/>
            <person name="Fabret C."/>
            <person name="Ferrari E."/>
            <person name="Foulger D."/>
            <person name="Fritz C."/>
            <person name="Fujita M."/>
            <person name="Fujita Y."/>
            <person name="Fuma S."/>
            <person name="Galizzi A."/>
            <person name="Galleron N."/>
            <person name="Ghim S.-Y."/>
            <person name="Glaser P."/>
            <person name="Goffeau A."/>
            <person name="Golightly E.J."/>
            <person name="Grandi G."/>
            <person name="Guiseppi G."/>
            <person name="Guy B.J."/>
            <person name="Haga K."/>
            <person name="Haiech J."/>
            <person name="Harwood C.R."/>
            <person name="Henaut A."/>
            <person name="Hilbert H."/>
            <person name="Holsappel S."/>
            <person name="Hosono S."/>
            <person name="Hullo M.-F."/>
            <person name="Itaya M."/>
            <person name="Jones L.-M."/>
            <person name="Joris B."/>
            <person name="Karamata D."/>
            <person name="Kasahara Y."/>
            <person name="Klaerr-Blanchard M."/>
            <person name="Klein C."/>
            <person name="Kobayashi Y."/>
            <person name="Koetter P."/>
            <person name="Koningstein G."/>
            <person name="Krogh S."/>
            <person name="Kumano M."/>
            <person name="Kurita K."/>
            <person name="Lapidus A."/>
            <person name="Lardinois S."/>
            <person name="Lauber J."/>
            <person name="Lazarevic V."/>
            <person name="Lee S.-M."/>
            <person name="Levine A."/>
            <person name="Liu H."/>
            <person name="Masuda S."/>
            <person name="Mauel C."/>
            <person name="Medigue C."/>
            <person name="Medina N."/>
            <person name="Mellado R.P."/>
            <person name="Mizuno M."/>
            <person name="Moestl D."/>
            <person name="Nakai S."/>
            <person name="Noback M."/>
            <person name="Noone D."/>
            <person name="O'Reilly M."/>
            <person name="Ogawa K."/>
            <person name="Ogiwara A."/>
            <person name="Oudega B."/>
            <person name="Park S.-H."/>
            <person name="Parro V."/>
            <person name="Pohl T.M."/>
            <person name="Portetelle D."/>
            <person name="Porwollik S."/>
            <person name="Prescott A.M."/>
            <person name="Presecan E."/>
            <person name="Pujic P."/>
            <person name="Purnelle B."/>
            <person name="Rapoport G."/>
            <person name="Rey M."/>
            <person name="Reynolds S."/>
            <person name="Rieger M."/>
            <person name="Rivolta C."/>
            <person name="Rocha E."/>
            <person name="Roche B."/>
            <person name="Rose M."/>
            <person name="Sadaie Y."/>
            <person name="Sato T."/>
            <person name="Scanlan E."/>
            <person name="Schleich S."/>
            <person name="Schroeter R."/>
            <person name="Scoffone F."/>
            <person name="Sekiguchi J."/>
            <person name="Sekowska A."/>
            <person name="Seror S.J."/>
            <person name="Serror P."/>
            <person name="Shin B.-S."/>
            <person name="Soldo B."/>
            <person name="Sorokin A."/>
            <person name="Tacconi E."/>
            <person name="Takagi T."/>
            <person name="Takahashi H."/>
            <person name="Takemaru K."/>
            <person name="Takeuchi M."/>
            <person name="Tamakoshi A."/>
            <person name="Tanaka T."/>
            <person name="Terpstra P."/>
            <person name="Tognoni A."/>
            <person name="Tosato V."/>
            <person name="Uchiyama S."/>
            <person name="Vandenbol M."/>
            <person name="Vannier F."/>
            <person name="Vassarotti A."/>
            <person name="Viari A."/>
            <person name="Wambutt R."/>
            <person name="Wedler E."/>
            <person name="Wedler H."/>
            <person name="Weitzenegger T."/>
            <person name="Winters P."/>
            <person name="Wipat A."/>
            <person name="Yamamoto H."/>
            <person name="Yamane K."/>
            <person name="Yasumoto K."/>
            <person name="Yata K."/>
            <person name="Yoshida K."/>
            <person name="Yoshikawa H.-F."/>
            <person name="Zumstein E."/>
            <person name="Yoshikawa H."/>
            <person name="Danchin A."/>
        </authorList>
    </citation>
    <scope>NUCLEOTIDE SEQUENCE [LARGE SCALE GENOMIC DNA]</scope>
    <source>
        <strain>168</strain>
    </source>
</reference>
<reference key="4">
    <citation type="journal article" date="2000" name="J. Bacteriol.">
        <title>The Bacillus subtilis yabG gene is transcribed by SigK RNA polymerase during sporulation, and yabG mutant spores have altered coat protein composition.</title>
        <authorList>
            <person name="Takamatsu H."/>
            <person name="Kodama T."/>
            <person name="Imamura A."/>
            <person name="Asai K."/>
            <person name="Kobayashi K."/>
            <person name="Nakayama T."/>
            <person name="Ogasawara N."/>
            <person name="Watabe K."/>
        </authorList>
    </citation>
    <scope>PROTEIN SEQUENCE OF 1-12</scope>
    <scope>AMOUNT IN YABG MUTANT SPORES</scope>
    <source>
        <strain>168</strain>
    </source>
</reference>
<reference key="5">
    <citation type="journal article" date="1994" name="Genes Dev.">
        <title>Subcellular localization of proteins involved in the assembly of the spore coat of Bacillus subtilis.</title>
        <authorList>
            <person name="Driks A."/>
            <person name="Roels S."/>
            <person name="Beall B."/>
            <person name="Moran C.P. Jr."/>
            <person name="Losick R."/>
        </authorList>
    </citation>
    <scope>FUNCTION</scope>
    <scope>SUBCELLULAR LOCATION</scope>
    <source>
        <strain>168 / PY79</strain>
    </source>
</reference>
<reference key="6">
    <citation type="journal article" date="1996" name="Microbiology">
        <title>Use of green fluorescent protein for detection of cell-specific gene expression and subcellular protein localization during sporulation in Bacillus subtilis.</title>
        <authorList>
            <person name="Lewis P.J."/>
            <person name="Errington J."/>
        </authorList>
    </citation>
    <scope>SUBCELLULAR LOCATION</scope>
    <source>
        <strain>SG38</strain>
    </source>
</reference>
<reference key="7">
    <citation type="journal article" date="1999" name="J. Bacteriol.">
        <title>A four-dimensional view of assembly of a morphogenetic protein during sporulation in Bacillus subtilis.</title>
        <authorList>
            <person name="Price K.D."/>
            <person name="Losick R."/>
        </authorList>
    </citation>
    <scope>SUBCELLULAR LOCATION</scope>
    <scope>DEVELOPMENTAL STAGE</scope>
    <scope>DOMAIN</scope>
    <source>
        <strain>168 / PY79</strain>
    </source>
</reference>
<reference key="8">
    <citation type="journal article" date="2000" name="FEMS Microbiol. Lett.">
        <title>The yabG gene of Bacillus subtilis encodes a sporulation specific protease which is involved in the processing of several spore coat proteins.</title>
        <authorList>
            <person name="Takamatsu H."/>
            <person name="Imamura A."/>
            <person name="Kodama T."/>
            <person name="Asai K."/>
            <person name="Ogasawara N."/>
            <person name="Watabe K."/>
        </authorList>
    </citation>
    <scope>CLEAVAGE BY YABG</scope>
    <source>
        <strain>168</strain>
    </source>
</reference>
<reference key="9">
    <citation type="journal article" date="2001" name="J. Bacteriol.">
        <title>Amino acids in the Bacillus subtilis morphogenetic protein SpoIVA with roles in spore coat and cortex formation.</title>
        <authorList>
            <person name="Catalano F.A."/>
            <person name="Meador-Parton J."/>
            <person name="Popham D.L."/>
            <person name="Driks A."/>
        </authorList>
    </citation>
    <scope>MUTAGENESIS OF LEU-59; MET-69; CYS-98; ILE-210; ARG-230; VAL-241; HIS-256; VAL-283; ILE-367; ILE-383; LEU-393; ILE-400; GLY-416; GLU-418; VAL-453 AND ILE-457</scope>
    <scope>DISRUPTION PHENOTYPE</scope>
    <source>
        <strain>168 / PY79</strain>
    </source>
</reference>
<reference key="10">
    <citation type="journal article" date="2006" name="Mol. Microbiol.">
        <title>Peptide anchoring spore coat assembly to the outer forespore membrane in Bacillus subtilis.</title>
        <authorList>
            <person name="Ramamurthi K.S."/>
            <person name="Clapham K.R."/>
            <person name="Losick R."/>
        </authorList>
    </citation>
    <scope>FUNCTION</scope>
    <scope>INTERACTION WITH SPOVM</scope>
    <scope>SUBCELLULAR LOCATION</scope>
    <scope>MUTAGENESIS OF GLY-486</scope>
    <source>
        <strain>168 / PY79</strain>
    </source>
</reference>
<reference key="11">
    <citation type="journal article" date="2008" name="Mol. Cell">
        <title>ATP-driven self-assembly of a morphogenetic protein in Bacillus subtilis.</title>
        <authorList>
            <person name="Ramamurthi K.S."/>
            <person name="Losick R."/>
        </authorList>
    </citation>
    <scope>FUNCTION</scope>
    <scope>CATALYTIC ACTIVITY</scope>
    <scope>BIOPHYSICOCHEMICAL PROPERTIES</scope>
    <scope>SUBUNIT</scope>
    <scope>SUBCELLULAR LOCATION</scope>
    <scope>ATP-BINDING</scope>
    <scope>MOTIF</scope>
    <scope>DISRUPTION PHENOTYPE</scope>
    <scope>MUTAGENESIS OF LYS-30</scope>
    <source>
        <strain>168 / PY79</strain>
    </source>
</reference>
<reference key="12">
    <citation type="journal article" date="2009" name="FEMS Microbiol. Lett.">
        <title>Interactions between Bacillus subtilis early spore coat morphogenetic proteins.</title>
        <authorList>
            <person name="Mullerova D."/>
            <person name="Krajcikova D."/>
            <person name="Barak I."/>
        </authorList>
    </citation>
    <scope>SUBUNIT</scope>
    <scope>INTERACTION WITH SPOVID AND SAFA</scope>
    <source>
        <strain>168 / PY79</strain>
    </source>
</reference>
<reference key="13">
    <citation type="journal article" date="2009" name="Mol. Microbiol.">
        <title>The coat morphogenetic protein SpoVID is necessary for spore encasement in Bacillus subtilis.</title>
        <authorList>
            <person name="Wang K.H."/>
            <person name="Isidro A.L."/>
            <person name="Domingues L."/>
            <person name="Eskandarian H.A."/>
            <person name="McKenney P.T."/>
            <person name="Drew K."/>
            <person name="Grabowski P."/>
            <person name="Chua M.H."/>
            <person name="Barry S.N."/>
            <person name="Guan M."/>
            <person name="Bonneau R."/>
            <person name="Henriques A.O."/>
            <person name="Eichenberger P."/>
        </authorList>
    </citation>
    <scope>INTERACTION WITH SPOVID</scope>
    <scope>SUBCELLULAR LOCATION</scope>
    <source>
        <strain>168 / PY79</strain>
    </source>
</reference>
<reference key="14">
    <citation type="journal article" date="2013" name="Proc. Natl. Acad. Sci. U.S.A.">
        <title>ATP hydrolysis by a domain related to translation factor GTPases drives polymerization of a static bacterial morphogenetic protein.</title>
        <authorList>
            <person name="Castaing J.P."/>
            <person name="Nagy A."/>
            <person name="Anantharaman V."/>
            <person name="Aravind L."/>
            <person name="Ramamurthi K.S."/>
        </authorList>
    </citation>
    <scope>FUNCTION</scope>
    <scope>CATALYTIC ACTIVITY</scope>
    <scope>BIOPHYSICOCHEMICAL PROPERTIES</scope>
    <scope>SUBUNIT</scope>
    <scope>SUBCELLULAR LOCATION</scope>
    <scope>ATP-BINDING</scope>
    <scope>MUTAGENESIS OF THR-70; THR-71; ASP-97 AND SER-189</scope>
    <source>
        <strain>168 / PY79</strain>
    </source>
</reference>
<gene>
    <name type="primary">spoIVA</name>
    <name type="synonym">spoVP</name>
    <name type="ordered locus">BSU22800</name>
</gene>
<organism>
    <name type="scientific">Bacillus subtilis (strain 168)</name>
    <dbReference type="NCBI Taxonomy" id="224308"/>
    <lineage>
        <taxon>Bacteria</taxon>
        <taxon>Bacillati</taxon>
        <taxon>Bacillota</taxon>
        <taxon>Bacilli</taxon>
        <taxon>Bacillales</taxon>
        <taxon>Bacillaceae</taxon>
        <taxon>Bacillus</taxon>
    </lineage>
</organism>
<proteinExistence type="evidence at protein level"/>
<sequence>MEKVDIFKDIAERTGGDIYLGVVGAVRTGKSTFIKKFMELVVLPNISNEADRARAQDELPQSAAGKTIMTTEPKFVPNQAMSVHVSDGLDVNIRLVDCVGYTVPGAKGYEDENGPRMINTPWYEEPIPFHEAAEIGTRKVIQEHSTIGVVITTDGTIGDIARSDYIEAEERVIEELKEVGKPFIMVINSVRPYHPETEAMRQDLSEKYDIPVLAMSVESMRESDVLSVLREALYEFPVLEVNVNLPSWVMVLKENHWLRESYQESVKETVKDIKRLRDVDRVVGQFSEFEFIESAGLAGIELGQGVAEIDLYAPDHLYDQILKEVVGVEIRGRDHLLELMQDFAHAKTEYDQVSDALKMVKQTGYGIAAPALADMSLDEPEIIRQGSRFGVRLKAVAPSIHMIKVDVESEFAPIIGTEKQSEELVRYLMQDFEDDPLSIWNSDIFGRSLSSIVREGIQAKLSLMPENARYKLKETLERIINEGSGGLIAIIL</sequence>